<proteinExistence type="predicted"/>
<accession>Q54WA5</accession>
<feature type="chain" id="PRO_0000352477" description="Uncharacterized protein DDB_G0279853">
    <location>
        <begin position="1"/>
        <end position="42"/>
    </location>
</feature>
<sequence length="42" mass="5212">MKKCFIIKQSHIIFFLCTFLNDNNWQKIHTQREKTQIKKKQC</sequence>
<protein>
    <recommendedName>
        <fullName>Uncharacterized protein DDB_G0279853</fullName>
    </recommendedName>
</protein>
<gene>
    <name type="ORF">DDB_G0279853</name>
</gene>
<name>Y8190_DICDI</name>
<dbReference type="EMBL" id="AAFI02000033">
    <property type="protein sequence ID" value="EAL67540.1"/>
    <property type="molecule type" value="Genomic_DNA"/>
</dbReference>
<dbReference type="RefSeq" id="XP_641487.1">
    <property type="nucleotide sequence ID" value="XM_636395.1"/>
</dbReference>
<dbReference type="SMR" id="Q54WA5"/>
<dbReference type="PaxDb" id="44689-DDB0218190"/>
<dbReference type="EnsemblProtists" id="EAL67540">
    <property type="protein sequence ID" value="EAL67540"/>
    <property type="gene ID" value="DDB_G0279853"/>
</dbReference>
<dbReference type="GeneID" id="8622227"/>
<dbReference type="KEGG" id="ddi:DDB_G0279853"/>
<dbReference type="VEuPathDB" id="AmoebaDB:DDB_G0279853"/>
<dbReference type="HOGENOM" id="CLU_3261618_0_0_1"/>
<dbReference type="InParanoid" id="Q54WA5"/>
<dbReference type="PRO" id="PR:Q54WA5"/>
<dbReference type="Proteomes" id="UP000002195">
    <property type="component" value="Chromosome 3"/>
</dbReference>
<keyword id="KW-1185">Reference proteome</keyword>
<organism>
    <name type="scientific">Dictyostelium discoideum</name>
    <name type="common">Social amoeba</name>
    <dbReference type="NCBI Taxonomy" id="44689"/>
    <lineage>
        <taxon>Eukaryota</taxon>
        <taxon>Amoebozoa</taxon>
        <taxon>Evosea</taxon>
        <taxon>Eumycetozoa</taxon>
        <taxon>Dictyostelia</taxon>
        <taxon>Dictyosteliales</taxon>
        <taxon>Dictyosteliaceae</taxon>
        <taxon>Dictyostelium</taxon>
    </lineage>
</organism>
<reference key="1">
    <citation type="journal article" date="2005" name="Nature">
        <title>The genome of the social amoeba Dictyostelium discoideum.</title>
        <authorList>
            <person name="Eichinger L."/>
            <person name="Pachebat J.A."/>
            <person name="Gloeckner G."/>
            <person name="Rajandream M.A."/>
            <person name="Sucgang R."/>
            <person name="Berriman M."/>
            <person name="Song J."/>
            <person name="Olsen R."/>
            <person name="Szafranski K."/>
            <person name="Xu Q."/>
            <person name="Tunggal B."/>
            <person name="Kummerfeld S."/>
            <person name="Madera M."/>
            <person name="Konfortov B.A."/>
            <person name="Rivero F."/>
            <person name="Bankier A.T."/>
            <person name="Lehmann R."/>
            <person name="Hamlin N."/>
            <person name="Davies R."/>
            <person name="Gaudet P."/>
            <person name="Fey P."/>
            <person name="Pilcher K."/>
            <person name="Chen G."/>
            <person name="Saunders D."/>
            <person name="Sodergren E.J."/>
            <person name="Davis P."/>
            <person name="Kerhornou A."/>
            <person name="Nie X."/>
            <person name="Hall N."/>
            <person name="Anjard C."/>
            <person name="Hemphill L."/>
            <person name="Bason N."/>
            <person name="Farbrother P."/>
            <person name="Desany B."/>
            <person name="Just E."/>
            <person name="Morio T."/>
            <person name="Rost R."/>
            <person name="Churcher C.M."/>
            <person name="Cooper J."/>
            <person name="Haydock S."/>
            <person name="van Driessche N."/>
            <person name="Cronin A."/>
            <person name="Goodhead I."/>
            <person name="Muzny D.M."/>
            <person name="Mourier T."/>
            <person name="Pain A."/>
            <person name="Lu M."/>
            <person name="Harper D."/>
            <person name="Lindsay R."/>
            <person name="Hauser H."/>
            <person name="James K.D."/>
            <person name="Quiles M."/>
            <person name="Madan Babu M."/>
            <person name="Saito T."/>
            <person name="Buchrieser C."/>
            <person name="Wardroper A."/>
            <person name="Felder M."/>
            <person name="Thangavelu M."/>
            <person name="Johnson D."/>
            <person name="Knights A."/>
            <person name="Loulseged H."/>
            <person name="Mungall K.L."/>
            <person name="Oliver K."/>
            <person name="Price C."/>
            <person name="Quail M.A."/>
            <person name="Urushihara H."/>
            <person name="Hernandez J."/>
            <person name="Rabbinowitsch E."/>
            <person name="Steffen D."/>
            <person name="Sanders M."/>
            <person name="Ma J."/>
            <person name="Kohara Y."/>
            <person name="Sharp S."/>
            <person name="Simmonds M.N."/>
            <person name="Spiegler S."/>
            <person name="Tivey A."/>
            <person name="Sugano S."/>
            <person name="White B."/>
            <person name="Walker D."/>
            <person name="Woodward J.R."/>
            <person name="Winckler T."/>
            <person name="Tanaka Y."/>
            <person name="Shaulsky G."/>
            <person name="Schleicher M."/>
            <person name="Weinstock G.M."/>
            <person name="Rosenthal A."/>
            <person name="Cox E.C."/>
            <person name="Chisholm R.L."/>
            <person name="Gibbs R.A."/>
            <person name="Loomis W.F."/>
            <person name="Platzer M."/>
            <person name="Kay R.R."/>
            <person name="Williams J.G."/>
            <person name="Dear P.H."/>
            <person name="Noegel A.A."/>
            <person name="Barrell B.G."/>
            <person name="Kuspa A."/>
        </authorList>
    </citation>
    <scope>NUCLEOTIDE SEQUENCE [LARGE SCALE GENOMIC DNA]</scope>
    <source>
        <strain>AX4</strain>
    </source>
</reference>